<accession>M1J8U6</accession>
<protein>
    <recommendedName>
        <fullName evidence="7">Eukaryotic translation initiation factor isoform 4E</fullName>
        <shortName evidence="7">eIF(iso)-4E</shortName>
        <shortName evidence="7">eIF(iso)4E</shortName>
    </recommendedName>
    <alternativeName>
        <fullName evidence="8">eIF-(iso)4F 25 kDa subunit</fullName>
    </alternativeName>
    <alternativeName>
        <fullName evidence="8">eIF-(iso)4F p28 subunit</fullName>
    </alternativeName>
    <alternativeName>
        <fullName evidence="8">mRNA cap-binding protein</fullName>
    </alternativeName>
</protein>
<reference key="1">
    <citation type="journal article" date="2013" name="PLoS ONE">
        <title>Silencing of the host factor eIF(iso)4E gene confers plum pox virus resistance in plum.</title>
        <authorList>
            <person name="Wang X."/>
            <person name="Kohalmi S.E."/>
            <person name="Svircev A."/>
            <person name="Wang A."/>
            <person name="Sanfacon H."/>
            <person name="Tian L."/>
        </authorList>
    </citation>
    <scope>NUCLEOTIDE SEQUENCE [MRNA]</scope>
    <scope>FUNCTION</scope>
    <scope>FUNCTION (MICROBIAL INFECTION)</scope>
    <scope>DISRUPTION PHENOTYPE (MICROBIAL INFECTION)</scope>
    <scope>TISSUE SPECIFICITY</scope>
    <scope>INTERACTION WITH POTYVIRUS VPG (MICROBIAL INFECTION)</scope>
    <scope>SUBCELLULAR LOCATION (MICROBIAL INFECTION)</scope>
</reference>
<sequence>MATEVAAAVPPPQLDAEENSGLEAAAAEAKIQPSSGPHKLERKWTFWFDNQSKPKQGAAWGSSLRKAYTFETVQEFWCLYDQVFKPSKFPPNADFHLFRAGVEPKWEDPECANGGKWTVTSRSKASLDTMWLETLMALIGEQFDEADEICGVVASVRQRQDKLALWTRNAANEAAQMGIGRKWKEIIDVTDKITYSFHDDSKRERSAKPRYNV</sequence>
<proteinExistence type="evidence at protein level"/>
<evidence type="ECO:0000250" key="1">
    <source>
        <dbReference type="UniProtKB" id="O04663"/>
    </source>
</evidence>
<evidence type="ECO:0000250" key="2">
    <source>
        <dbReference type="UniProtKB" id="P29557"/>
    </source>
</evidence>
<evidence type="ECO:0000250" key="3">
    <source>
        <dbReference type="UniProtKB" id="Q00LS8"/>
    </source>
</evidence>
<evidence type="ECO:0000250" key="4">
    <source>
        <dbReference type="UniProtKB" id="Q66WU1"/>
    </source>
</evidence>
<evidence type="ECO:0000256" key="5">
    <source>
        <dbReference type="SAM" id="MobiDB-lite"/>
    </source>
</evidence>
<evidence type="ECO:0000269" key="6">
    <source>
    </source>
</evidence>
<evidence type="ECO:0000303" key="7">
    <source>
    </source>
</evidence>
<evidence type="ECO:0000305" key="8"/>
<dbReference type="EMBL" id="JX137117">
    <property type="protein sequence ID" value="AGE81988.1"/>
    <property type="molecule type" value="mRNA"/>
</dbReference>
<dbReference type="SMR" id="M1J8U6"/>
<dbReference type="GO" id="GO:0005737">
    <property type="term" value="C:cytoplasm"/>
    <property type="evidence" value="ECO:0000314"/>
    <property type="project" value="UniProtKB"/>
</dbReference>
<dbReference type="GO" id="GO:0016281">
    <property type="term" value="C:eukaryotic translation initiation factor 4F complex"/>
    <property type="evidence" value="ECO:0007669"/>
    <property type="project" value="TreeGrafter"/>
</dbReference>
<dbReference type="GO" id="GO:0005634">
    <property type="term" value="C:nucleus"/>
    <property type="evidence" value="ECO:0000314"/>
    <property type="project" value="UniProtKB"/>
</dbReference>
<dbReference type="GO" id="GO:0000340">
    <property type="term" value="F:RNA 7-methylguanosine cap binding"/>
    <property type="evidence" value="ECO:0007669"/>
    <property type="project" value="TreeGrafter"/>
</dbReference>
<dbReference type="GO" id="GO:0003743">
    <property type="term" value="F:translation initiation factor activity"/>
    <property type="evidence" value="ECO:0007669"/>
    <property type="project" value="UniProtKB-KW"/>
</dbReference>
<dbReference type="GO" id="GO:0051607">
    <property type="term" value="P:defense response to virus"/>
    <property type="evidence" value="ECO:0000315"/>
    <property type="project" value="UniProtKB"/>
</dbReference>
<dbReference type="GO" id="GO:0006417">
    <property type="term" value="P:regulation of translation"/>
    <property type="evidence" value="ECO:0007669"/>
    <property type="project" value="UniProtKB-KW"/>
</dbReference>
<dbReference type="FunFam" id="3.30.760.10:FF:000003">
    <property type="entry name" value="Eukaryotic translation initiation factor 4E"/>
    <property type="match status" value="1"/>
</dbReference>
<dbReference type="Gene3D" id="3.30.760.10">
    <property type="entry name" value="RNA Cap, Translation Initiation Factor Eif4e"/>
    <property type="match status" value="1"/>
</dbReference>
<dbReference type="InterPro" id="IPR023398">
    <property type="entry name" value="TIF_eIF4e-like"/>
</dbReference>
<dbReference type="InterPro" id="IPR001040">
    <property type="entry name" value="TIF_eIF_4E"/>
</dbReference>
<dbReference type="InterPro" id="IPR019770">
    <property type="entry name" value="TIF_eIF_4E_CS"/>
</dbReference>
<dbReference type="PANTHER" id="PTHR11960">
    <property type="entry name" value="EUKARYOTIC TRANSLATION INITIATION FACTOR 4E RELATED"/>
    <property type="match status" value="1"/>
</dbReference>
<dbReference type="PANTHER" id="PTHR11960:SF60">
    <property type="entry name" value="EUKARYOTIC TRANSLATION INITIATION FACTOR ISOFORM 4E-2"/>
    <property type="match status" value="1"/>
</dbReference>
<dbReference type="Pfam" id="PF01652">
    <property type="entry name" value="IF4E"/>
    <property type="match status" value="1"/>
</dbReference>
<dbReference type="SUPFAM" id="SSF55418">
    <property type="entry name" value="eIF4e-like"/>
    <property type="match status" value="1"/>
</dbReference>
<dbReference type="PROSITE" id="PS00813">
    <property type="entry name" value="IF4E"/>
    <property type="match status" value="1"/>
</dbReference>
<name>IFI4E_PRUDO</name>
<organism>
    <name type="scientific">Prunus domestica</name>
    <name type="common">Garden plum</name>
    <dbReference type="NCBI Taxonomy" id="3758"/>
    <lineage>
        <taxon>Eukaryota</taxon>
        <taxon>Viridiplantae</taxon>
        <taxon>Streptophyta</taxon>
        <taxon>Embryophyta</taxon>
        <taxon>Tracheophyta</taxon>
        <taxon>Spermatophyta</taxon>
        <taxon>Magnoliopsida</taxon>
        <taxon>eudicotyledons</taxon>
        <taxon>Gunneridae</taxon>
        <taxon>Pentapetalae</taxon>
        <taxon>rosids</taxon>
        <taxon>fabids</taxon>
        <taxon>Rosales</taxon>
        <taxon>Rosaceae</taxon>
        <taxon>Amygdaloideae</taxon>
        <taxon>Amygdaleae</taxon>
        <taxon>Prunus</taxon>
    </lineage>
</organism>
<keyword id="KW-0963">Cytoplasm</keyword>
<keyword id="KW-1015">Disulfide bond</keyword>
<keyword id="KW-0945">Host-virus interaction</keyword>
<keyword id="KW-0396">Initiation factor</keyword>
<keyword id="KW-0539">Nucleus</keyword>
<keyword id="KW-0611">Plant defense</keyword>
<keyword id="KW-0648">Protein biosynthesis</keyword>
<keyword id="KW-0694">RNA-binding</keyword>
<keyword id="KW-0810">Translation regulation</keyword>
<gene>
    <name evidence="7" type="primary">eIF(iso)4E</name>
</gene>
<comment type="function">
    <text evidence="4 6">Component of the protein complex eIF4F, which is involved in the recognition of the mRNA cap, ATP-dependent unwinding of 5'-terminal secondary structure and recruitment of mRNA to the ribosome (By similarity). Recognizes and binds the 7-methylguanosine-containing mRNA cap during an early step in the initiation of protein synthesis and facilitates ribosome binding by inducing the unwinding of the mRNAs secondary structures (By similarity). Key component of recessive resistance to potyviruses such as the plum pox virus (PPV) strain D (PubMed:23382802).</text>
</comment>
<comment type="function">
    <text evidence="6">(Microbial infection) Susceptibility host factor required for viral infection by recruiting viral RNAs to the host ribosomal complex via an interaction with viral genome-linked protein (VPg).</text>
</comment>
<comment type="subunit">
    <text evidence="1">EIF4F is a multi-subunit complex, the composition of which varies with external and internal environmental conditions (By similarity). It is composed of at least EIF4A, EIF4E and EIF4G (By similarity). EIF4E is also known to interact with other partners. In higher plants two isoforms of EIF4F have been identified, named isoform EIF4F and isoform EIF(iso)4F (By similarity). Isoform EIF4F has subunits p220 and p26, whereas isoform EIF(iso)4F has subunits p82 and p28 (By similarity).</text>
</comment>
<comment type="subunit">
    <text evidence="6">(Microbial infection) Interacts with potyvirus viral genome-linked protein (VPg) of plum pox virus (PPV) strain D both in nucleus and cytoplasm; this interaction is possible in susceptible hosts but is impaired in resistant plants.</text>
</comment>
<comment type="subcellular location">
    <subcellularLocation>
        <location evidence="6">Cytoplasm</location>
    </subcellularLocation>
    <subcellularLocation>
        <location evidence="6">Nucleus</location>
    </subcellularLocation>
    <text evidence="6">(Microbial infection) Binds to potyvirus viral genome-linked protein (VPg) in cytoplasm and nucleus.</text>
</comment>
<comment type="tissue specificity">
    <text evidence="6">Mostly expressed in leaves, flower buds, leaf buds and anthers, to a lower extent in roots, stems and green immature fruit, and, at low levels, in petals.</text>
</comment>
<comment type="PTM">
    <text evidence="2">According to the redox status, the Cys-111-Cys-150 disulfide bridge may have a role in regulating protein function by affecting its ability to bind capped mRNA.</text>
</comment>
<comment type="disruption phenotype">
    <text evidence="6">(Microbial infection) Increased resistance to plum pox virus (PPV) strain D.</text>
</comment>
<comment type="similarity">
    <text evidence="8">Belongs to the eukaryotic initiation factor 4E family.</text>
</comment>
<feature type="chain" id="PRO_0000454074" description="Eukaryotic translation initiation factor isoform 4E">
    <location>
        <begin position="1"/>
        <end position="213"/>
    </location>
</feature>
<feature type="region of interest" description="Disordered" evidence="5">
    <location>
        <begin position="1"/>
        <end position="37"/>
    </location>
</feature>
<feature type="binding site" evidence="2">
    <location>
        <begin position="56"/>
        <end position="61"/>
    </location>
    <ligand>
        <name>mRNA</name>
        <dbReference type="ChEBI" id="CHEBI:33699"/>
    </ligand>
    <ligandPart>
        <name>N(7)-methylguanosine 5'-triphosphate group</name>
        <dbReference type="ChEBI" id="CHEBI:74429"/>
        <note>m7GTP residue in mRNA cap</note>
    </ligandPart>
</feature>
<feature type="binding site" evidence="2">
    <location>
        <position position="88"/>
    </location>
    <ligand>
        <name>mRNA</name>
        <dbReference type="ChEBI" id="CHEBI:33699"/>
    </ligand>
    <ligandPart>
        <name>N(7)-methylguanosine 5'-triphosphate group</name>
        <dbReference type="ChEBI" id="CHEBI:74429"/>
        <note>m7GTP residue in mRNA cap</note>
    </ligandPart>
</feature>
<feature type="binding site" evidence="2">
    <location>
        <begin position="106"/>
        <end position="107"/>
    </location>
    <ligand>
        <name>mRNA</name>
        <dbReference type="ChEBI" id="CHEBI:33699"/>
    </ligand>
    <ligandPart>
        <name>N(7)-methylguanosine 5'-triphosphate group</name>
        <dbReference type="ChEBI" id="CHEBI:74429"/>
        <note>m7GTP residue in mRNA cap</note>
    </ligandPart>
</feature>
<feature type="binding site" evidence="2">
    <location>
        <begin position="157"/>
        <end position="162"/>
    </location>
    <ligand>
        <name>mRNA</name>
        <dbReference type="ChEBI" id="CHEBI:33699"/>
    </ligand>
    <ligandPart>
        <name>N(7)-methylguanosine 5'-triphosphate group</name>
        <dbReference type="ChEBI" id="CHEBI:74429"/>
        <note>m7GTP residue in mRNA cap</note>
    </ligandPart>
</feature>
<feature type="binding site" evidence="3">
    <location>
        <begin position="202"/>
        <end position="205"/>
    </location>
    <ligand>
        <name>mRNA</name>
        <dbReference type="ChEBI" id="CHEBI:33699"/>
    </ligand>
    <ligandPart>
        <name>N(7)-methylguanosine 5'-triphosphate group</name>
        <dbReference type="ChEBI" id="CHEBI:74429"/>
        <note>m7GTP residue in mRNA cap</note>
    </ligandPart>
</feature>
<feature type="disulfide bond" evidence="2">
    <location>
        <begin position="111"/>
        <end position="150"/>
    </location>
</feature>